<keyword id="KW-0143">Chaperone</keyword>
<keyword id="KW-0963">Cytoplasm</keyword>
<keyword id="KW-0235">DNA replication</keyword>
<keyword id="KW-0479">Metal-binding</keyword>
<keyword id="KW-1185">Reference proteome</keyword>
<keyword id="KW-0677">Repeat</keyword>
<keyword id="KW-0346">Stress response</keyword>
<keyword id="KW-0862">Zinc</keyword>
<keyword id="KW-0863">Zinc-finger</keyword>
<dbReference type="EMBL" id="CP000774">
    <property type="protein sequence ID" value="ABS65171.1"/>
    <property type="molecule type" value="Genomic_DNA"/>
</dbReference>
<dbReference type="RefSeq" id="WP_012112431.1">
    <property type="nucleotide sequence ID" value="NC_009719.1"/>
</dbReference>
<dbReference type="SMR" id="A7HZ38"/>
<dbReference type="STRING" id="402881.Plav_3573"/>
<dbReference type="KEGG" id="pla:Plav_3573"/>
<dbReference type="eggNOG" id="COG0484">
    <property type="taxonomic scope" value="Bacteria"/>
</dbReference>
<dbReference type="HOGENOM" id="CLU_017633_0_7_5"/>
<dbReference type="OrthoDB" id="9779889at2"/>
<dbReference type="Proteomes" id="UP000006377">
    <property type="component" value="Chromosome"/>
</dbReference>
<dbReference type="GO" id="GO:0005737">
    <property type="term" value="C:cytoplasm"/>
    <property type="evidence" value="ECO:0007669"/>
    <property type="project" value="UniProtKB-SubCell"/>
</dbReference>
<dbReference type="GO" id="GO:0005524">
    <property type="term" value="F:ATP binding"/>
    <property type="evidence" value="ECO:0007669"/>
    <property type="project" value="InterPro"/>
</dbReference>
<dbReference type="GO" id="GO:0031072">
    <property type="term" value="F:heat shock protein binding"/>
    <property type="evidence" value="ECO:0007669"/>
    <property type="project" value="InterPro"/>
</dbReference>
<dbReference type="GO" id="GO:0051082">
    <property type="term" value="F:unfolded protein binding"/>
    <property type="evidence" value="ECO:0007669"/>
    <property type="project" value="UniProtKB-UniRule"/>
</dbReference>
<dbReference type="GO" id="GO:0008270">
    <property type="term" value="F:zinc ion binding"/>
    <property type="evidence" value="ECO:0007669"/>
    <property type="project" value="UniProtKB-UniRule"/>
</dbReference>
<dbReference type="GO" id="GO:0051085">
    <property type="term" value="P:chaperone cofactor-dependent protein refolding"/>
    <property type="evidence" value="ECO:0007669"/>
    <property type="project" value="TreeGrafter"/>
</dbReference>
<dbReference type="GO" id="GO:0006260">
    <property type="term" value="P:DNA replication"/>
    <property type="evidence" value="ECO:0007669"/>
    <property type="project" value="UniProtKB-KW"/>
</dbReference>
<dbReference type="GO" id="GO:0042026">
    <property type="term" value="P:protein refolding"/>
    <property type="evidence" value="ECO:0007669"/>
    <property type="project" value="TreeGrafter"/>
</dbReference>
<dbReference type="GO" id="GO:0009408">
    <property type="term" value="P:response to heat"/>
    <property type="evidence" value="ECO:0007669"/>
    <property type="project" value="InterPro"/>
</dbReference>
<dbReference type="CDD" id="cd06257">
    <property type="entry name" value="DnaJ"/>
    <property type="match status" value="1"/>
</dbReference>
<dbReference type="CDD" id="cd10747">
    <property type="entry name" value="DnaJ_C"/>
    <property type="match status" value="1"/>
</dbReference>
<dbReference type="CDD" id="cd10719">
    <property type="entry name" value="DnaJ_zf"/>
    <property type="match status" value="1"/>
</dbReference>
<dbReference type="FunFam" id="1.10.287.110:FF:000034">
    <property type="entry name" value="Chaperone protein DnaJ"/>
    <property type="match status" value="1"/>
</dbReference>
<dbReference type="FunFam" id="2.10.230.10:FF:000002">
    <property type="entry name" value="Molecular chaperone DnaJ"/>
    <property type="match status" value="1"/>
</dbReference>
<dbReference type="FunFam" id="2.60.260.20:FF:000004">
    <property type="entry name" value="Molecular chaperone DnaJ"/>
    <property type="match status" value="1"/>
</dbReference>
<dbReference type="Gene3D" id="1.10.287.110">
    <property type="entry name" value="DnaJ domain"/>
    <property type="match status" value="1"/>
</dbReference>
<dbReference type="Gene3D" id="2.10.230.10">
    <property type="entry name" value="Heat shock protein DnaJ, cysteine-rich domain"/>
    <property type="match status" value="1"/>
</dbReference>
<dbReference type="Gene3D" id="2.60.260.20">
    <property type="entry name" value="Urease metallochaperone UreE, N-terminal domain"/>
    <property type="match status" value="2"/>
</dbReference>
<dbReference type="HAMAP" id="MF_01152">
    <property type="entry name" value="DnaJ"/>
    <property type="match status" value="1"/>
</dbReference>
<dbReference type="InterPro" id="IPR012724">
    <property type="entry name" value="DnaJ"/>
</dbReference>
<dbReference type="InterPro" id="IPR002939">
    <property type="entry name" value="DnaJ_C"/>
</dbReference>
<dbReference type="InterPro" id="IPR001623">
    <property type="entry name" value="DnaJ_domain"/>
</dbReference>
<dbReference type="InterPro" id="IPR018253">
    <property type="entry name" value="DnaJ_domain_CS"/>
</dbReference>
<dbReference type="InterPro" id="IPR008971">
    <property type="entry name" value="HSP40/DnaJ_pept-bd"/>
</dbReference>
<dbReference type="InterPro" id="IPR001305">
    <property type="entry name" value="HSP_DnaJ_Cys-rich_dom"/>
</dbReference>
<dbReference type="InterPro" id="IPR036410">
    <property type="entry name" value="HSP_DnaJ_Cys-rich_dom_sf"/>
</dbReference>
<dbReference type="InterPro" id="IPR036869">
    <property type="entry name" value="J_dom_sf"/>
</dbReference>
<dbReference type="NCBIfam" id="TIGR02349">
    <property type="entry name" value="DnaJ_bact"/>
    <property type="match status" value="1"/>
</dbReference>
<dbReference type="NCBIfam" id="NF008035">
    <property type="entry name" value="PRK10767.1"/>
    <property type="match status" value="1"/>
</dbReference>
<dbReference type="PANTHER" id="PTHR43096:SF48">
    <property type="entry name" value="CHAPERONE PROTEIN DNAJ"/>
    <property type="match status" value="1"/>
</dbReference>
<dbReference type="PANTHER" id="PTHR43096">
    <property type="entry name" value="DNAJ HOMOLOG 1, MITOCHONDRIAL-RELATED"/>
    <property type="match status" value="1"/>
</dbReference>
<dbReference type="Pfam" id="PF00226">
    <property type="entry name" value="DnaJ"/>
    <property type="match status" value="1"/>
</dbReference>
<dbReference type="Pfam" id="PF01556">
    <property type="entry name" value="DnaJ_C"/>
    <property type="match status" value="1"/>
</dbReference>
<dbReference type="Pfam" id="PF00684">
    <property type="entry name" value="DnaJ_CXXCXGXG"/>
    <property type="match status" value="1"/>
</dbReference>
<dbReference type="PRINTS" id="PR00625">
    <property type="entry name" value="JDOMAIN"/>
</dbReference>
<dbReference type="SMART" id="SM00271">
    <property type="entry name" value="DnaJ"/>
    <property type="match status" value="1"/>
</dbReference>
<dbReference type="SUPFAM" id="SSF46565">
    <property type="entry name" value="Chaperone J-domain"/>
    <property type="match status" value="1"/>
</dbReference>
<dbReference type="SUPFAM" id="SSF57938">
    <property type="entry name" value="DnaJ/Hsp40 cysteine-rich domain"/>
    <property type="match status" value="1"/>
</dbReference>
<dbReference type="SUPFAM" id="SSF49493">
    <property type="entry name" value="HSP40/DnaJ peptide-binding domain"/>
    <property type="match status" value="2"/>
</dbReference>
<dbReference type="PROSITE" id="PS00636">
    <property type="entry name" value="DNAJ_1"/>
    <property type="match status" value="1"/>
</dbReference>
<dbReference type="PROSITE" id="PS50076">
    <property type="entry name" value="DNAJ_2"/>
    <property type="match status" value="1"/>
</dbReference>
<dbReference type="PROSITE" id="PS51188">
    <property type="entry name" value="ZF_CR"/>
    <property type="match status" value="1"/>
</dbReference>
<protein>
    <recommendedName>
        <fullName evidence="1">Chaperone protein DnaJ</fullName>
    </recommendedName>
</protein>
<name>DNAJ_PARL1</name>
<proteinExistence type="inferred from homology"/>
<evidence type="ECO:0000255" key="1">
    <source>
        <dbReference type="HAMAP-Rule" id="MF_01152"/>
    </source>
</evidence>
<feature type="chain" id="PRO_1000085239" description="Chaperone protein DnaJ">
    <location>
        <begin position="1"/>
        <end position="385"/>
    </location>
</feature>
<feature type="domain" description="J" evidence="1">
    <location>
        <begin position="5"/>
        <end position="70"/>
    </location>
</feature>
<feature type="repeat" description="CXXCXGXG motif">
    <location>
        <begin position="156"/>
        <end position="163"/>
    </location>
</feature>
<feature type="repeat" description="CXXCXGXG motif">
    <location>
        <begin position="173"/>
        <end position="180"/>
    </location>
</feature>
<feature type="repeat" description="CXXCXGXG motif">
    <location>
        <begin position="195"/>
        <end position="202"/>
    </location>
</feature>
<feature type="repeat" description="CXXCXGXG motif">
    <location>
        <begin position="209"/>
        <end position="216"/>
    </location>
</feature>
<feature type="zinc finger region" description="CR-type" evidence="1">
    <location>
        <begin position="143"/>
        <end position="221"/>
    </location>
</feature>
<feature type="binding site" evidence="1">
    <location>
        <position position="156"/>
    </location>
    <ligand>
        <name>Zn(2+)</name>
        <dbReference type="ChEBI" id="CHEBI:29105"/>
        <label>1</label>
    </ligand>
</feature>
<feature type="binding site" evidence="1">
    <location>
        <position position="159"/>
    </location>
    <ligand>
        <name>Zn(2+)</name>
        <dbReference type="ChEBI" id="CHEBI:29105"/>
        <label>1</label>
    </ligand>
</feature>
<feature type="binding site" evidence="1">
    <location>
        <position position="173"/>
    </location>
    <ligand>
        <name>Zn(2+)</name>
        <dbReference type="ChEBI" id="CHEBI:29105"/>
        <label>2</label>
    </ligand>
</feature>
<feature type="binding site" evidence="1">
    <location>
        <position position="176"/>
    </location>
    <ligand>
        <name>Zn(2+)</name>
        <dbReference type="ChEBI" id="CHEBI:29105"/>
        <label>2</label>
    </ligand>
</feature>
<feature type="binding site" evidence="1">
    <location>
        <position position="195"/>
    </location>
    <ligand>
        <name>Zn(2+)</name>
        <dbReference type="ChEBI" id="CHEBI:29105"/>
        <label>2</label>
    </ligand>
</feature>
<feature type="binding site" evidence="1">
    <location>
        <position position="198"/>
    </location>
    <ligand>
        <name>Zn(2+)</name>
        <dbReference type="ChEBI" id="CHEBI:29105"/>
        <label>2</label>
    </ligand>
</feature>
<feature type="binding site" evidence="1">
    <location>
        <position position="209"/>
    </location>
    <ligand>
        <name>Zn(2+)</name>
        <dbReference type="ChEBI" id="CHEBI:29105"/>
        <label>1</label>
    </ligand>
</feature>
<feature type="binding site" evidence="1">
    <location>
        <position position="212"/>
    </location>
    <ligand>
        <name>Zn(2+)</name>
        <dbReference type="ChEBI" id="CHEBI:29105"/>
        <label>1</label>
    </ligand>
</feature>
<comment type="function">
    <text evidence="1">Participates actively in the response to hyperosmotic and heat shock by preventing the aggregation of stress-denatured proteins and by disaggregating proteins, also in an autonomous, DnaK-independent fashion. Unfolded proteins bind initially to DnaJ; upon interaction with the DnaJ-bound protein, DnaK hydrolyzes its bound ATP, resulting in the formation of a stable complex. GrpE releases ADP from DnaK; ATP binding to DnaK triggers the release of the substrate protein, thus completing the reaction cycle. Several rounds of ATP-dependent interactions between DnaJ, DnaK and GrpE are required for fully efficient folding. Also involved, together with DnaK and GrpE, in the DNA replication of plasmids through activation of initiation proteins.</text>
</comment>
<comment type="cofactor">
    <cofactor evidence="1">
        <name>Zn(2+)</name>
        <dbReference type="ChEBI" id="CHEBI:29105"/>
    </cofactor>
    <text evidence="1">Binds 2 Zn(2+) ions per monomer.</text>
</comment>
<comment type="subunit">
    <text evidence="1">Homodimer.</text>
</comment>
<comment type="subcellular location">
    <subcellularLocation>
        <location evidence="1">Cytoplasm</location>
    </subcellularLocation>
</comment>
<comment type="domain">
    <text evidence="1">The J domain is necessary and sufficient to stimulate DnaK ATPase activity. Zinc center 1 plays an important role in the autonomous, DnaK-independent chaperone activity of DnaJ. Zinc center 2 is essential for interaction with DnaK and for DnaJ activity.</text>
</comment>
<comment type="similarity">
    <text evidence="1">Belongs to the DnaJ family.</text>
</comment>
<organism>
    <name type="scientific">Parvibaculum lavamentivorans (strain DS-1 / DSM 13023 / NCIMB 13966)</name>
    <dbReference type="NCBI Taxonomy" id="402881"/>
    <lineage>
        <taxon>Bacteria</taxon>
        <taxon>Pseudomonadati</taxon>
        <taxon>Pseudomonadota</taxon>
        <taxon>Alphaproteobacteria</taxon>
        <taxon>Hyphomicrobiales</taxon>
        <taxon>Parvibaculaceae</taxon>
        <taxon>Parvibaculum</taxon>
    </lineage>
</organism>
<sequence>MSKRDFYDVLGVSRNASADELKKAYRSLAKKYHPDQNQGDKEAEQRFKELNEAYDALKDEQSRAAYDQFGHAAFDGGMGARGGPGGMGGFGAGASMSDIFDDLFGEFMGGRGGRGGRRGDGGQTRGHDLRYNMEISLEEAFEGKKAQVRVPGSVACEVCTGTGAAPGSSPITCPTCQGHGKVRASQGFFTIERTCPTCHGRGQTIDKPCTNCHGAGRVEKERTLSVNIPAGVEDGTRIRLSGEGEAGMRGGPAGDLYIFLSVKPHRLFERDGADLFCRVPIAMVTATLGGEIEVPTLGGKKVKVKVPEGAQTGRQFRLRGKGMPVVNSRETGDLYIQITVETPVNLTKKQKELLKEFEQASTPGNNPESAGFFAKVKEFWDGFQN</sequence>
<gene>
    <name evidence="1" type="primary">dnaJ</name>
    <name type="ordered locus">Plav_3573</name>
</gene>
<reference key="1">
    <citation type="journal article" date="2011" name="Stand. Genomic Sci.">
        <title>Complete genome sequence of Parvibaculum lavamentivorans type strain (DS-1(T)).</title>
        <authorList>
            <person name="Schleheck D."/>
            <person name="Weiss M."/>
            <person name="Pitluck S."/>
            <person name="Bruce D."/>
            <person name="Land M.L."/>
            <person name="Han S."/>
            <person name="Saunders E."/>
            <person name="Tapia R."/>
            <person name="Detter C."/>
            <person name="Brettin T."/>
            <person name="Han J."/>
            <person name="Woyke T."/>
            <person name="Goodwin L."/>
            <person name="Pennacchio L."/>
            <person name="Nolan M."/>
            <person name="Cook A.M."/>
            <person name="Kjelleberg S."/>
            <person name="Thomas T."/>
        </authorList>
    </citation>
    <scope>NUCLEOTIDE SEQUENCE [LARGE SCALE GENOMIC DNA]</scope>
    <source>
        <strain>DS-1 / DSM 13023 / NCIMB 13966</strain>
    </source>
</reference>
<accession>A7HZ38</accession>